<gene>
    <name evidence="1" type="primary">rplJ</name>
    <name type="ordered locus">Mfla_0270</name>
</gene>
<keyword id="KW-1185">Reference proteome</keyword>
<keyword id="KW-0687">Ribonucleoprotein</keyword>
<keyword id="KW-0689">Ribosomal protein</keyword>
<keyword id="KW-0694">RNA-binding</keyword>
<keyword id="KW-0699">rRNA-binding</keyword>
<accession>Q1H4P6</accession>
<feature type="chain" id="PRO_1000005532" description="Large ribosomal subunit protein uL10">
    <location>
        <begin position="1"/>
        <end position="174"/>
    </location>
</feature>
<reference key="1">
    <citation type="submission" date="2006-03" db="EMBL/GenBank/DDBJ databases">
        <title>Complete sequence of Methylobacillus flagellatus KT.</title>
        <authorList>
            <consortium name="US DOE Joint Genome Institute"/>
            <person name="Copeland A."/>
            <person name="Lucas S."/>
            <person name="Lapidus A."/>
            <person name="Barry K."/>
            <person name="Detter J.C."/>
            <person name="Glavina del Rio T."/>
            <person name="Hammon N."/>
            <person name="Israni S."/>
            <person name="Dalin E."/>
            <person name="Tice H."/>
            <person name="Pitluck S."/>
            <person name="Brettin T."/>
            <person name="Bruce D."/>
            <person name="Han C."/>
            <person name="Tapia R."/>
            <person name="Saunders E."/>
            <person name="Gilna P."/>
            <person name="Schmutz J."/>
            <person name="Larimer F."/>
            <person name="Land M."/>
            <person name="Kyrpides N."/>
            <person name="Anderson I."/>
            <person name="Richardson P."/>
        </authorList>
    </citation>
    <scope>NUCLEOTIDE SEQUENCE [LARGE SCALE GENOMIC DNA]</scope>
    <source>
        <strain>ATCC 51484 / DSM 6875 / VKM B-1610 / KT</strain>
    </source>
</reference>
<dbReference type="EMBL" id="CP000284">
    <property type="protein sequence ID" value="ABE48541.1"/>
    <property type="molecule type" value="Genomic_DNA"/>
</dbReference>
<dbReference type="RefSeq" id="WP_011478638.1">
    <property type="nucleotide sequence ID" value="NC_007947.1"/>
</dbReference>
<dbReference type="SMR" id="Q1H4P6"/>
<dbReference type="STRING" id="265072.Mfla_0270"/>
<dbReference type="KEGG" id="mfa:Mfla_0270"/>
<dbReference type="eggNOG" id="COG0244">
    <property type="taxonomic scope" value="Bacteria"/>
</dbReference>
<dbReference type="HOGENOM" id="CLU_092227_0_1_4"/>
<dbReference type="OrthoDB" id="9808307at2"/>
<dbReference type="Proteomes" id="UP000002440">
    <property type="component" value="Chromosome"/>
</dbReference>
<dbReference type="GO" id="GO:1990904">
    <property type="term" value="C:ribonucleoprotein complex"/>
    <property type="evidence" value="ECO:0007669"/>
    <property type="project" value="UniProtKB-KW"/>
</dbReference>
<dbReference type="GO" id="GO:0005840">
    <property type="term" value="C:ribosome"/>
    <property type="evidence" value="ECO:0007669"/>
    <property type="project" value="UniProtKB-KW"/>
</dbReference>
<dbReference type="GO" id="GO:0070180">
    <property type="term" value="F:large ribosomal subunit rRNA binding"/>
    <property type="evidence" value="ECO:0007669"/>
    <property type="project" value="UniProtKB-UniRule"/>
</dbReference>
<dbReference type="GO" id="GO:0006412">
    <property type="term" value="P:translation"/>
    <property type="evidence" value="ECO:0007669"/>
    <property type="project" value="UniProtKB-UniRule"/>
</dbReference>
<dbReference type="CDD" id="cd05797">
    <property type="entry name" value="Ribosomal_L10"/>
    <property type="match status" value="1"/>
</dbReference>
<dbReference type="Gene3D" id="3.30.70.1730">
    <property type="match status" value="1"/>
</dbReference>
<dbReference type="Gene3D" id="6.10.250.290">
    <property type="match status" value="1"/>
</dbReference>
<dbReference type="HAMAP" id="MF_00362">
    <property type="entry name" value="Ribosomal_uL10"/>
    <property type="match status" value="1"/>
</dbReference>
<dbReference type="InterPro" id="IPR001790">
    <property type="entry name" value="Ribosomal_uL10"/>
</dbReference>
<dbReference type="InterPro" id="IPR043141">
    <property type="entry name" value="Ribosomal_uL10-like_sf"/>
</dbReference>
<dbReference type="InterPro" id="IPR022973">
    <property type="entry name" value="Ribosomal_uL10_bac"/>
</dbReference>
<dbReference type="InterPro" id="IPR047865">
    <property type="entry name" value="Ribosomal_uL10_bac_type"/>
</dbReference>
<dbReference type="NCBIfam" id="NF000955">
    <property type="entry name" value="PRK00099.1-1"/>
    <property type="match status" value="1"/>
</dbReference>
<dbReference type="PANTHER" id="PTHR11560">
    <property type="entry name" value="39S RIBOSOMAL PROTEIN L10, MITOCHONDRIAL"/>
    <property type="match status" value="1"/>
</dbReference>
<dbReference type="Pfam" id="PF00466">
    <property type="entry name" value="Ribosomal_L10"/>
    <property type="match status" value="1"/>
</dbReference>
<dbReference type="SUPFAM" id="SSF160369">
    <property type="entry name" value="Ribosomal protein L10-like"/>
    <property type="match status" value="1"/>
</dbReference>
<evidence type="ECO:0000255" key="1">
    <source>
        <dbReference type="HAMAP-Rule" id="MF_00362"/>
    </source>
</evidence>
<evidence type="ECO:0000305" key="2"/>
<name>RL10_METFK</name>
<sequence>MSLNLEQKKAVVAEVSEQVAQAQAIVLAEYRGIEVGDMTKLRAEARKSGVYLRVLKNTLVRRAVDGTQFSGLANDMVGPLVFGISADPVAAAKVLNNFAKANDKFVIKAGALPGKVLDAKGVQSLATLPSREELLAKLLGTMQAPVAQFVRTLNEVPTKFARGLAAVRDQKQAA</sequence>
<organism>
    <name type="scientific">Methylobacillus flagellatus (strain ATCC 51484 / DSM 6875 / VKM B-1610 / KT)</name>
    <dbReference type="NCBI Taxonomy" id="265072"/>
    <lineage>
        <taxon>Bacteria</taxon>
        <taxon>Pseudomonadati</taxon>
        <taxon>Pseudomonadota</taxon>
        <taxon>Betaproteobacteria</taxon>
        <taxon>Nitrosomonadales</taxon>
        <taxon>Methylophilaceae</taxon>
        <taxon>Methylobacillus</taxon>
    </lineage>
</organism>
<proteinExistence type="inferred from homology"/>
<protein>
    <recommendedName>
        <fullName evidence="1">Large ribosomal subunit protein uL10</fullName>
    </recommendedName>
    <alternativeName>
        <fullName evidence="2">50S ribosomal protein L10</fullName>
    </alternativeName>
</protein>
<comment type="function">
    <text evidence="1">Forms part of the ribosomal stalk, playing a central role in the interaction of the ribosome with GTP-bound translation factors.</text>
</comment>
<comment type="subunit">
    <text evidence="1">Part of the ribosomal stalk of the 50S ribosomal subunit. The N-terminus interacts with L11 and the large rRNA to form the base of the stalk. The C-terminus forms an elongated spine to which L12 dimers bind in a sequential fashion forming a multimeric L10(L12)X complex.</text>
</comment>
<comment type="similarity">
    <text evidence="1">Belongs to the universal ribosomal protein uL10 family.</text>
</comment>